<protein>
    <recommendedName>
        <fullName>RutC family protein PM1466</fullName>
    </recommendedName>
</protein>
<accession>Q9L6B5</accession>
<sequence length="129" mass="13868">MTKVIHTDNAPAAIGPYVQAVDLGNMLLTSGQIPVNPKTGEVPADIVAQARQSLENVKAIVEQAGLQVANIVKTTVFVKDLNDFAAVNAEYERFFKENNHPSFPARSCVEVARLPKDVGIEIEAIAVKA</sequence>
<dbReference type="EMBL" id="AF237923">
    <property type="protein sequence ID" value="AAF68409.1"/>
    <property type="molecule type" value="Genomic_DNA"/>
</dbReference>
<dbReference type="EMBL" id="AE004439">
    <property type="protein sequence ID" value="AAK03550.1"/>
    <property type="molecule type" value="Genomic_DNA"/>
</dbReference>
<dbReference type="RefSeq" id="WP_005718022.1">
    <property type="nucleotide sequence ID" value="NC_002663.1"/>
</dbReference>
<dbReference type="SMR" id="Q9L6B5"/>
<dbReference type="STRING" id="272843.PM1466"/>
<dbReference type="EnsemblBacteria" id="AAK03550">
    <property type="protein sequence ID" value="AAK03550"/>
    <property type="gene ID" value="PM1466"/>
</dbReference>
<dbReference type="KEGG" id="pmu:PM1466"/>
<dbReference type="HOGENOM" id="CLU_100715_7_1_6"/>
<dbReference type="OrthoDB" id="9803101at2"/>
<dbReference type="Proteomes" id="UP000000809">
    <property type="component" value="Chromosome"/>
</dbReference>
<dbReference type="GO" id="GO:0005829">
    <property type="term" value="C:cytosol"/>
    <property type="evidence" value="ECO:0007669"/>
    <property type="project" value="TreeGrafter"/>
</dbReference>
<dbReference type="GO" id="GO:0019239">
    <property type="term" value="F:deaminase activity"/>
    <property type="evidence" value="ECO:0007669"/>
    <property type="project" value="TreeGrafter"/>
</dbReference>
<dbReference type="CDD" id="cd00448">
    <property type="entry name" value="YjgF_YER057c_UK114_family"/>
    <property type="match status" value="1"/>
</dbReference>
<dbReference type="FunFam" id="3.30.1330.40:FF:000001">
    <property type="entry name" value="L-PSP family endoribonuclease"/>
    <property type="match status" value="1"/>
</dbReference>
<dbReference type="Gene3D" id="3.30.1330.40">
    <property type="entry name" value="RutC-like"/>
    <property type="match status" value="1"/>
</dbReference>
<dbReference type="InterPro" id="IPR006056">
    <property type="entry name" value="RidA"/>
</dbReference>
<dbReference type="InterPro" id="IPR019897">
    <property type="entry name" value="RidA_CS"/>
</dbReference>
<dbReference type="InterPro" id="IPR035959">
    <property type="entry name" value="RutC-like_sf"/>
</dbReference>
<dbReference type="InterPro" id="IPR006175">
    <property type="entry name" value="YjgF/YER057c/UK114"/>
</dbReference>
<dbReference type="NCBIfam" id="TIGR00004">
    <property type="entry name" value="Rid family detoxifying hydrolase"/>
    <property type="match status" value="1"/>
</dbReference>
<dbReference type="PANTHER" id="PTHR11803">
    <property type="entry name" value="2-IMINOBUTANOATE/2-IMINOPROPANOATE DEAMINASE RIDA"/>
    <property type="match status" value="1"/>
</dbReference>
<dbReference type="PANTHER" id="PTHR11803:SF39">
    <property type="entry name" value="2-IMINOBUTANOATE_2-IMINOPROPANOATE DEAMINASE"/>
    <property type="match status" value="1"/>
</dbReference>
<dbReference type="Pfam" id="PF01042">
    <property type="entry name" value="Ribonuc_L-PSP"/>
    <property type="match status" value="1"/>
</dbReference>
<dbReference type="SUPFAM" id="SSF55298">
    <property type="entry name" value="YjgF-like"/>
    <property type="match status" value="1"/>
</dbReference>
<dbReference type="PROSITE" id="PS01094">
    <property type="entry name" value="UPF0076"/>
    <property type="match status" value="1"/>
</dbReference>
<gene>
    <name type="ordered locus">PM1466</name>
</gene>
<evidence type="ECO:0000305" key="1"/>
<name>Y1466_PASMU</name>
<comment type="similarity">
    <text evidence="1">Belongs to the RutC family.</text>
</comment>
<reference key="1">
    <citation type="journal article" date="2000" name="Microb. Pathog.">
        <title>Identification of Pasteurella multocida virulence genes in a septicemic mouse model using signature-tagged mutagenesis.</title>
        <authorList>
            <person name="Fuller T.E."/>
            <person name="Kennedy M.J."/>
            <person name="Lowery D.E."/>
        </authorList>
    </citation>
    <scope>NUCLEOTIDE SEQUENCE [GENOMIC DNA]</scope>
</reference>
<reference key="2">
    <citation type="journal article" date="2001" name="Proc. Natl. Acad. Sci. U.S.A.">
        <title>Complete genomic sequence of Pasteurella multocida Pm70.</title>
        <authorList>
            <person name="May B.J."/>
            <person name="Zhang Q."/>
            <person name="Li L.L."/>
            <person name="Paustian M.L."/>
            <person name="Whittam T.S."/>
            <person name="Kapur V."/>
        </authorList>
    </citation>
    <scope>NUCLEOTIDE SEQUENCE [LARGE SCALE GENOMIC DNA]</scope>
    <source>
        <strain>Pm70</strain>
    </source>
</reference>
<feature type="chain" id="PRO_0000170338" description="RutC family protein PM1466">
    <location>
        <begin position="1"/>
        <end position="129"/>
    </location>
</feature>
<proteinExistence type="inferred from homology"/>
<keyword id="KW-1185">Reference proteome</keyword>
<organism>
    <name type="scientific">Pasteurella multocida (strain Pm70)</name>
    <dbReference type="NCBI Taxonomy" id="272843"/>
    <lineage>
        <taxon>Bacteria</taxon>
        <taxon>Pseudomonadati</taxon>
        <taxon>Pseudomonadota</taxon>
        <taxon>Gammaproteobacteria</taxon>
        <taxon>Pasteurellales</taxon>
        <taxon>Pasteurellaceae</taxon>
        <taxon>Pasteurella</taxon>
    </lineage>
</organism>